<dbReference type="EC" id="2.7.4.22" evidence="1"/>
<dbReference type="EMBL" id="AM286280">
    <property type="protein sequence ID" value="CAL08331.1"/>
    <property type="molecule type" value="Genomic_DNA"/>
</dbReference>
<dbReference type="RefSeq" id="WP_003021612.1">
    <property type="nucleotide sequence ID" value="NC_008245.1"/>
</dbReference>
<dbReference type="SMR" id="Q14JD0"/>
<dbReference type="GeneID" id="75264271"/>
<dbReference type="KEGG" id="ftf:FTF0315"/>
<dbReference type="HOGENOM" id="CLU_033861_0_0_6"/>
<dbReference type="UniPathway" id="UPA00159">
    <property type="reaction ID" value="UER00275"/>
</dbReference>
<dbReference type="GO" id="GO:0005737">
    <property type="term" value="C:cytoplasm"/>
    <property type="evidence" value="ECO:0007669"/>
    <property type="project" value="UniProtKB-SubCell"/>
</dbReference>
<dbReference type="GO" id="GO:0005524">
    <property type="term" value="F:ATP binding"/>
    <property type="evidence" value="ECO:0007669"/>
    <property type="project" value="UniProtKB-KW"/>
</dbReference>
<dbReference type="GO" id="GO:0033862">
    <property type="term" value="F:UMP kinase activity"/>
    <property type="evidence" value="ECO:0007669"/>
    <property type="project" value="UniProtKB-EC"/>
</dbReference>
<dbReference type="GO" id="GO:0044210">
    <property type="term" value="P:'de novo' CTP biosynthetic process"/>
    <property type="evidence" value="ECO:0007669"/>
    <property type="project" value="UniProtKB-UniRule"/>
</dbReference>
<dbReference type="GO" id="GO:0006225">
    <property type="term" value="P:UDP biosynthetic process"/>
    <property type="evidence" value="ECO:0007669"/>
    <property type="project" value="TreeGrafter"/>
</dbReference>
<dbReference type="CDD" id="cd04254">
    <property type="entry name" value="AAK_UMPK-PyrH-Ec"/>
    <property type="match status" value="1"/>
</dbReference>
<dbReference type="FunFam" id="3.40.1160.10:FF:000001">
    <property type="entry name" value="Uridylate kinase"/>
    <property type="match status" value="1"/>
</dbReference>
<dbReference type="Gene3D" id="3.40.1160.10">
    <property type="entry name" value="Acetylglutamate kinase-like"/>
    <property type="match status" value="1"/>
</dbReference>
<dbReference type="HAMAP" id="MF_01220_B">
    <property type="entry name" value="PyrH_B"/>
    <property type="match status" value="1"/>
</dbReference>
<dbReference type="InterPro" id="IPR036393">
    <property type="entry name" value="AceGlu_kinase-like_sf"/>
</dbReference>
<dbReference type="InterPro" id="IPR001048">
    <property type="entry name" value="Asp/Glu/Uridylate_kinase"/>
</dbReference>
<dbReference type="InterPro" id="IPR011817">
    <property type="entry name" value="Uridylate_kinase"/>
</dbReference>
<dbReference type="InterPro" id="IPR015963">
    <property type="entry name" value="Uridylate_kinase_bac"/>
</dbReference>
<dbReference type="NCBIfam" id="TIGR02075">
    <property type="entry name" value="pyrH_bact"/>
    <property type="match status" value="1"/>
</dbReference>
<dbReference type="PANTHER" id="PTHR42833">
    <property type="entry name" value="URIDYLATE KINASE"/>
    <property type="match status" value="1"/>
</dbReference>
<dbReference type="PANTHER" id="PTHR42833:SF4">
    <property type="entry name" value="URIDYLATE KINASE PUMPKIN, CHLOROPLASTIC"/>
    <property type="match status" value="1"/>
</dbReference>
<dbReference type="Pfam" id="PF00696">
    <property type="entry name" value="AA_kinase"/>
    <property type="match status" value="1"/>
</dbReference>
<dbReference type="PIRSF" id="PIRSF005650">
    <property type="entry name" value="Uridylate_kin"/>
    <property type="match status" value="1"/>
</dbReference>
<dbReference type="SUPFAM" id="SSF53633">
    <property type="entry name" value="Carbamate kinase-like"/>
    <property type="match status" value="1"/>
</dbReference>
<comment type="function">
    <text evidence="1">Catalyzes the reversible phosphorylation of UMP to UDP.</text>
</comment>
<comment type="catalytic activity">
    <reaction evidence="1">
        <text>UMP + ATP = UDP + ADP</text>
        <dbReference type="Rhea" id="RHEA:24400"/>
        <dbReference type="ChEBI" id="CHEBI:30616"/>
        <dbReference type="ChEBI" id="CHEBI:57865"/>
        <dbReference type="ChEBI" id="CHEBI:58223"/>
        <dbReference type="ChEBI" id="CHEBI:456216"/>
        <dbReference type="EC" id="2.7.4.22"/>
    </reaction>
</comment>
<comment type="activity regulation">
    <text evidence="1">Inhibited by UTP.</text>
</comment>
<comment type="pathway">
    <text evidence="1">Pyrimidine metabolism; CTP biosynthesis via de novo pathway; UDP from UMP (UMPK route): step 1/1.</text>
</comment>
<comment type="subunit">
    <text evidence="1">Homohexamer.</text>
</comment>
<comment type="subcellular location">
    <subcellularLocation>
        <location evidence="1">Cytoplasm</location>
    </subcellularLocation>
</comment>
<comment type="similarity">
    <text evidence="1">Belongs to the UMP kinase family.</text>
</comment>
<evidence type="ECO:0000255" key="1">
    <source>
        <dbReference type="HAMAP-Rule" id="MF_01220"/>
    </source>
</evidence>
<accession>Q14JD0</accession>
<gene>
    <name evidence="1" type="primary">pyrH</name>
    <name type="ordered locus">FTF0315</name>
</gene>
<name>PYRH_FRAT1</name>
<proteinExistence type="inferred from homology"/>
<feature type="chain" id="PRO_0000323853" description="Uridylate kinase">
    <location>
        <begin position="1"/>
        <end position="249"/>
    </location>
</feature>
<feature type="binding site" evidence="1">
    <location>
        <begin position="21"/>
        <end position="24"/>
    </location>
    <ligand>
        <name>ATP</name>
        <dbReference type="ChEBI" id="CHEBI:30616"/>
    </ligand>
</feature>
<feature type="binding site" evidence="1">
    <location>
        <position position="63"/>
    </location>
    <ligand>
        <name>UMP</name>
        <dbReference type="ChEBI" id="CHEBI:57865"/>
    </ligand>
</feature>
<feature type="binding site" evidence="1">
    <location>
        <position position="64"/>
    </location>
    <ligand>
        <name>ATP</name>
        <dbReference type="ChEBI" id="CHEBI:30616"/>
    </ligand>
</feature>
<feature type="binding site" evidence="1">
    <location>
        <position position="68"/>
    </location>
    <ligand>
        <name>ATP</name>
        <dbReference type="ChEBI" id="CHEBI:30616"/>
    </ligand>
</feature>
<feature type="binding site" evidence="1">
    <location>
        <position position="84"/>
    </location>
    <ligand>
        <name>UMP</name>
        <dbReference type="ChEBI" id="CHEBI:57865"/>
    </ligand>
</feature>
<feature type="binding site" evidence="1">
    <location>
        <begin position="145"/>
        <end position="152"/>
    </location>
    <ligand>
        <name>UMP</name>
        <dbReference type="ChEBI" id="CHEBI:57865"/>
    </ligand>
</feature>
<feature type="binding site" evidence="1">
    <location>
        <position position="172"/>
    </location>
    <ligand>
        <name>ATP</name>
        <dbReference type="ChEBI" id="CHEBI:30616"/>
    </ligand>
</feature>
<feature type="binding site" evidence="1">
    <location>
        <position position="178"/>
    </location>
    <ligand>
        <name>ATP</name>
        <dbReference type="ChEBI" id="CHEBI:30616"/>
    </ligand>
</feature>
<feature type="binding site" evidence="1">
    <location>
        <position position="181"/>
    </location>
    <ligand>
        <name>ATP</name>
        <dbReference type="ChEBI" id="CHEBI:30616"/>
    </ligand>
</feature>
<keyword id="KW-0067">ATP-binding</keyword>
<keyword id="KW-0963">Cytoplasm</keyword>
<keyword id="KW-0418">Kinase</keyword>
<keyword id="KW-0547">Nucleotide-binding</keyword>
<keyword id="KW-0665">Pyrimidine biosynthesis</keyword>
<keyword id="KW-0808">Transferase</keyword>
<organism>
    <name type="scientific">Francisella tularensis subsp. tularensis (strain FSC 198)</name>
    <dbReference type="NCBI Taxonomy" id="393115"/>
    <lineage>
        <taxon>Bacteria</taxon>
        <taxon>Pseudomonadati</taxon>
        <taxon>Pseudomonadota</taxon>
        <taxon>Gammaproteobacteria</taxon>
        <taxon>Thiotrichales</taxon>
        <taxon>Francisellaceae</taxon>
        <taxon>Francisella</taxon>
    </lineage>
</organism>
<sequence>MSNDSSECSQKLPKLKRILLKLSGESLSADQGFGINVESAQPIINQIKTLTNFGVELALVVGGGNILRGGRANFGNKIRRATADSMGMIATMINALALRDMLISEGVDAEVFSAKGVDGLLKVASAHEFNQELAKGRVLIFAGGTGNPFVTTDTTASLRAVEIGADALLKATTVNGVYDKDPNKYSDAKRFDKVTFSEVVSKELNVMDLGAFTQCRDFGIPIYVFDLTQPNALVDAVLDSKYGTWVTLD</sequence>
<protein>
    <recommendedName>
        <fullName evidence="1">Uridylate kinase</fullName>
        <shortName evidence="1">UK</shortName>
        <ecNumber evidence="1">2.7.4.22</ecNumber>
    </recommendedName>
    <alternativeName>
        <fullName evidence="1">Uridine monophosphate kinase</fullName>
        <shortName evidence="1">UMP kinase</shortName>
        <shortName evidence="1">UMPK</shortName>
    </alternativeName>
</protein>
<reference key="1">
    <citation type="journal article" date="2007" name="PLoS ONE">
        <title>Genome sequencing shows that European isolates of Francisella tularensis subspecies tularensis are almost identical to US laboratory strain Schu S4.</title>
        <authorList>
            <person name="Chaudhuri R.R."/>
            <person name="Ren C.-P."/>
            <person name="Desmond L."/>
            <person name="Vincent G.A."/>
            <person name="Silman N.J."/>
            <person name="Brehm J.K."/>
            <person name="Elmore M.J."/>
            <person name="Hudson M.J."/>
            <person name="Forsman M."/>
            <person name="Isherwood K.E."/>
            <person name="Gurycova D."/>
            <person name="Minton N.P."/>
            <person name="Titball R.W."/>
            <person name="Pallen M.J."/>
            <person name="Vipond R."/>
        </authorList>
    </citation>
    <scope>NUCLEOTIDE SEQUENCE [LARGE SCALE GENOMIC DNA]</scope>
    <source>
        <strain>FSC 198</strain>
    </source>
</reference>